<evidence type="ECO:0000255" key="1">
    <source>
        <dbReference type="HAMAP-Rule" id="MF_00523"/>
    </source>
</evidence>
<dbReference type="EC" id="2.3.1.191" evidence="1"/>
<dbReference type="EMBL" id="CP000628">
    <property type="protein sequence ID" value="ACM26469.1"/>
    <property type="molecule type" value="Genomic_DNA"/>
</dbReference>
<dbReference type="RefSeq" id="WP_012651362.1">
    <property type="nucleotide sequence ID" value="NC_011985.1"/>
</dbReference>
<dbReference type="SMR" id="B9JEX8"/>
<dbReference type="STRING" id="311403.Arad_2229"/>
<dbReference type="GeneID" id="86848362"/>
<dbReference type="KEGG" id="ara:Arad_2229"/>
<dbReference type="eggNOG" id="COG1044">
    <property type="taxonomic scope" value="Bacteria"/>
</dbReference>
<dbReference type="HOGENOM" id="CLU_049865_0_2_5"/>
<dbReference type="UniPathway" id="UPA00973"/>
<dbReference type="Proteomes" id="UP000001600">
    <property type="component" value="Chromosome 1"/>
</dbReference>
<dbReference type="GO" id="GO:0016020">
    <property type="term" value="C:membrane"/>
    <property type="evidence" value="ECO:0007669"/>
    <property type="project" value="GOC"/>
</dbReference>
<dbReference type="GO" id="GO:0016410">
    <property type="term" value="F:N-acyltransferase activity"/>
    <property type="evidence" value="ECO:0007669"/>
    <property type="project" value="InterPro"/>
</dbReference>
<dbReference type="GO" id="GO:0009245">
    <property type="term" value="P:lipid A biosynthetic process"/>
    <property type="evidence" value="ECO:0007669"/>
    <property type="project" value="UniProtKB-UniRule"/>
</dbReference>
<dbReference type="CDD" id="cd03352">
    <property type="entry name" value="LbH_LpxD"/>
    <property type="match status" value="1"/>
</dbReference>
<dbReference type="Gene3D" id="2.160.10.10">
    <property type="entry name" value="Hexapeptide repeat proteins"/>
    <property type="match status" value="1"/>
</dbReference>
<dbReference type="Gene3D" id="3.40.1390.10">
    <property type="entry name" value="MurE/MurF, N-terminal domain"/>
    <property type="match status" value="1"/>
</dbReference>
<dbReference type="HAMAP" id="MF_00523">
    <property type="entry name" value="LpxD"/>
    <property type="match status" value="1"/>
</dbReference>
<dbReference type="InterPro" id="IPR001451">
    <property type="entry name" value="Hexapep"/>
</dbReference>
<dbReference type="InterPro" id="IPR018357">
    <property type="entry name" value="Hexapep_transf_CS"/>
</dbReference>
<dbReference type="InterPro" id="IPR007691">
    <property type="entry name" value="LpxD"/>
</dbReference>
<dbReference type="InterPro" id="IPR011004">
    <property type="entry name" value="Trimer_LpxA-like_sf"/>
</dbReference>
<dbReference type="InterPro" id="IPR020573">
    <property type="entry name" value="UDP_GlcNAc_AcTrfase_non-rep"/>
</dbReference>
<dbReference type="NCBIfam" id="TIGR01853">
    <property type="entry name" value="lipid_A_lpxD"/>
    <property type="match status" value="1"/>
</dbReference>
<dbReference type="NCBIfam" id="NF002060">
    <property type="entry name" value="PRK00892.1"/>
    <property type="match status" value="1"/>
</dbReference>
<dbReference type="PANTHER" id="PTHR43378">
    <property type="entry name" value="UDP-3-O-ACYLGLUCOSAMINE N-ACYLTRANSFERASE"/>
    <property type="match status" value="1"/>
</dbReference>
<dbReference type="PANTHER" id="PTHR43378:SF2">
    <property type="entry name" value="UDP-3-O-ACYLGLUCOSAMINE N-ACYLTRANSFERASE 1, MITOCHONDRIAL-RELATED"/>
    <property type="match status" value="1"/>
</dbReference>
<dbReference type="Pfam" id="PF00132">
    <property type="entry name" value="Hexapep"/>
    <property type="match status" value="3"/>
</dbReference>
<dbReference type="Pfam" id="PF04613">
    <property type="entry name" value="LpxD"/>
    <property type="match status" value="1"/>
</dbReference>
<dbReference type="SUPFAM" id="SSF51161">
    <property type="entry name" value="Trimeric LpxA-like enzymes"/>
    <property type="match status" value="1"/>
</dbReference>
<dbReference type="PROSITE" id="PS00101">
    <property type="entry name" value="HEXAPEP_TRANSFERASES"/>
    <property type="match status" value="2"/>
</dbReference>
<reference key="1">
    <citation type="journal article" date="2009" name="J. Bacteriol.">
        <title>Genome sequences of three Agrobacterium biovars help elucidate the evolution of multichromosome genomes in bacteria.</title>
        <authorList>
            <person name="Slater S.C."/>
            <person name="Goldman B.S."/>
            <person name="Goodner B."/>
            <person name="Setubal J.C."/>
            <person name="Farrand S.K."/>
            <person name="Nester E.W."/>
            <person name="Burr T.J."/>
            <person name="Banta L."/>
            <person name="Dickerman A.W."/>
            <person name="Paulsen I."/>
            <person name="Otten L."/>
            <person name="Suen G."/>
            <person name="Welch R."/>
            <person name="Almeida N.F."/>
            <person name="Arnold F."/>
            <person name="Burton O.T."/>
            <person name="Du Z."/>
            <person name="Ewing A."/>
            <person name="Godsy E."/>
            <person name="Heisel S."/>
            <person name="Houmiel K.L."/>
            <person name="Jhaveri J."/>
            <person name="Lu J."/>
            <person name="Miller N.M."/>
            <person name="Norton S."/>
            <person name="Chen Q."/>
            <person name="Phoolcharoen W."/>
            <person name="Ohlin V."/>
            <person name="Ondrusek D."/>
            <person name="Pride N."/>
            <person name="Stricklin S.L."/>
            <person name="Sun J."/>
            <person name="Wheeler C."/>
            <person name="Wilson L."/>
            <person name="Zhu H."/>
            <person name="Wood D.W."/>
        </authorList>
    </citation>
    <scope>NUCLEOTIDE SEQUENCE [LARGE SCALE GENOMIC DNA]</scope>
    <source>
        <strain>K84 / ATCC BAA-868</strain>
    </source>
</reference>
<comment type="function">
    <text evidence="1">Catalyzes the N-acylation of UDP-3-O-acylglucosamine using 3-hydroxyacyl-ACP as the acyl donor. Is involved in the biosynthesis of lipid A, a phosphorylated glycolipid that anchors the lipopolysaccharide to the outer membrane of the cell.</text>
</comment>
<comment type="catalytic activity">
    <reaction evidence="1">
        <text>a UDP-3-O-[(3R)-3-hydroxyacyl]-alpha-D-glucosamine + a (3R)-hydroxyacyl-[ACP] = a UDP-2-N,3-O-bis[(3R)-3-hydroxyacyl]-alpha-D-glucosamine + holo-[ACP] + H(+)</text>
        <dbReference type="Rhea" id="RHEA:53836"/>
        <dbReference type="Rhea" id="RHEA-COMP:9685"/>
        <dbReference type="Rhea" id="RHEA-COMP:9945"/>
        <dbReference type="ChEBI" id="CHEBI:15378"/>
        <dbReference type="ChEBI" id="CHEBI:64479"/>
        <dbReference type="ChEBI" id="CHEBI:78827"/>
        <dbReference type="ChEBI" id="CHEBI:137740"/>
        <dbReference type="ChEBI" id="CHEBI:137748"/>
        <dbReference type="EC" id="2.3.1.191"/>
    </reaction>
</comment>
<comment type="pathway">
    <text evidence="1">Bacterial outer membrane biogenesis; LPS lipid A biosynthesis.</text>
</comment>
<comment type="subunit">
    <text evidence="1">Homotrimer.</text>
</comment>
<comment type="similarity">
    <text evidence="1">Belongs to the transferase hexapeptide repeat family. LpxD subfamily.</text>
</comment>
<sequence>MEHIGFFPPHDGVSLRALAEHLGAELADEAFAGVIIKSIAPVYRAGDGDVCYLLSRKNRAELETCKASAIICLPTLSSLVPEHIPVLLSKKPHTDFALAGALLHPQAMRPVALTSTPTLISPTAFVDPTAKLEADVGVEPGAVVGPGAEIGEGTRIGAGAIIGPGVKIGRHCTIGGGASVLCSYLGNGVIIHNGARIGQDGFGYAPSPRGMIKIVQIGRVIIQDNVEIGANTTIDRGTMDDTVIGEGTKIDNQVQIGHNVRIGRYCAIVSQVGIAGSAVIGDGVQIGGHTGINGHIQIGDGVQIGAMSGVMNSIPAGERFAGIPARPLWDFLREAAEVAKRSGAREKKDGSAEHD</sequence>
<protein>
    <recommendedName>
        <fullName evidence="1">UDP-3-O-acylglucosamine N-acyltransferase</fullName>
        <ecNumber evidence="1">2.3.1.191</ecNumber>
    </recommendedName>
</protein>
<feature type="chain" id="PRO_1000190888" description="UDP-3-O-acylglucosamine N-acyltransferase">
    <location>
        <begin position="1"/>
        <end position="355"/>
    </location>
</feature>
<feature type="active site" description="Proton acceptor" evidence="1">
    <location>
        <position position="258"/>
    </location>
</feature>
<organism>
    <name type="scientific">Rhizobium rhizogenes (strain K84 / ATCC BAA-868)</name>
    <name type="common">Agrobacterium radiobacter</name>
    <dbReference type="NCBI Taxonomy" id="311403"/>
    <lineage>
        <taxon>Bacteria</taxon>
        <taxon>Pseudomonadati</taxon>
        <taxon>Pseudomonadota</taxon>
        <taxon>Alphaproteobacteria</taxon>
        <taxon>Hyphomicrobiales</taxon>
        <taxon>Rhizobiaceae</taxon>
        <taxon>Rhizobium/Agrobacterium group</taxon>
        <taxon>Rhizobium</taxon>
    </lineage>
</organism>
<gene>
    <name evidence="1" type="primary">lpxD</name>
    <name type="ordered locus">Arad_2229</name>
</gene>
<name>LPXD_RHIR8</name>
<proteinExistence type="inferred from homology"/>
<accession>B9JEX8</accession>
<keyword id="KW-0012">Acyltransferase</keyword>
<keyword id="KW-0441">Lipid A biosynthesis</keyword>
<keyword id="KW-0444">Lipid biosynthesis</keyword>
<keyword id="KW-0443">Lipid metabolism</keyword>
<keyword id="KW-0677">Repeat</keyword>
<keyword id="KW-0808">Transferase</keyword>